<proteinExistence type="evidence at protein level"/>
<comment type="function">
    <text evidence="4">Catalyzes the production of L-lysyl-tRNA(Lys)transfer and the transfer of a lysyl group from L-lysyl-tRNA(Lys) to membrane-bound phosphatidylglycerol (PG), which produces lysylphosphatidylglycerol (LPG), one of the components of the bacterial membrane with a positive net charge. LPG synthesis contributes to the resistance to cationic antimicrobial peptides (CAMPs) and likely protects M.tuberculosis against the CAMPs produced by competiting microorganisms (bacteriocins). In fact, the modification of anionic phosphatidylglycerol with positively charged L-lysine results in repulsion of the peptides.</text>
</comment>
<comment type="catalytic activity">
    <reaction>
        <text>tRNA(Lys) + L-lysine + ATP = L-lysyl-tRNA(Lys) + AMP + diphosphate</text>
        <dbReference type="Rhea" id="RHEA:20792"/>
        <dbReference type="Rhea" id="RHEA-COMP:9696"/>
        <dbReference type="Rhea" id="RHEA-COMP:9697"/>
        <dbReference type="ChEBI" id="CHEBI:30616"/>
        <dbReference type="ChEBI" id="CHEBI:32551"/>
        <dbReference type="ChEBI" id="CHEBI:33019"/>
        <dbReference type="ChEBI" id="CHEBI:78442"/>
        <dbReference type="ChEBI" id="CHEBI:78529"/>
        <dbReference type="ChEBI" id="CHEBI:456215"/>
        <dbReference type="EC" id="6.1.1.6"/>
    </reaction>
</comment>
<comment type="catalytic activity">
    <reaction>
        <text>L-lysyl-tRNA(Lys) + a 1,2-diacyl-sn-glycero-3-phospho-(1'-sn-glycerol) = a 1,2-diacyl-sn-glycero-3-phospho-1'-(3'-O-L-lysyl)-sn-glycerol + tRNA(Lys)</text>
        <dbReference type="Rhea" id="RHEA:10668"/>
        <dbReference type="Rhea" id="RHEA-COMP:9696"/>
        <dbReference type="Rhea" id="RHEA-COMP:9697"/>
        <dbReference type="ChEBI" id="CHEBI:64716"/>
        <dbReference type="ChEBI" id="CHEBI:75792"/>
        <dbReference type="ChEBI" id="CHEBI:78442"/>
        <dbReference type="ChEBI" id="CHEBI:78529"/>
        <dbReference type="EC" id="2.3.2.3"/>
    </reaction>
</comment>
<comment type="cofactor">
    <cofactor evidence="1">
        <name>Mg(2+)</name>
        <dbReference type="ChEBI" id="CHEBI:18420"/>
    </cofactor>
    <text evidence="1">Binds 3 Mg(2+) ions per subunit.</text>
</comment>
<comment type="subcellular location">
    <subcellularLocation>
        <location evidence="5">Cell membrane</location>
        <topology evidence="5">Multi-pass membrane protein</topology>
    </subcellularLocation>
</comment>
<comment type="miscellaneous">
    <text>There are two lysyl-tRNA ligases in M.tuberculosis.</text>
</comment>
<comment type="similarity">
    <text evidence="5">In the N-terminal section; belongs to the LPG synthetase family.</text>
</comment>
<comment type="similarity">
    <text evidence="5">In the C-terminal section; belongs to the class-II aminoacyl-tRNA synthetase family.</text>
</comment>
<sequence>MGLHLTVPGLRRDGRGVQSNSHDTSSKTTADISRCPQHTDAGLQRAATPGISRLLGISSRSVTLTKPRSATRGNSRYHWVPAAAGWTVGVIATLSLLASVSPLIRWIIKVPREFINDYLFNFPDTNFAWSFVLALLAAALTARKRIAWLVLLANMVLAAVVNAAEIAAGGNTAAESFGENLGFAVHVVAIVVLVLGYREFWAKVRRGALFRAAAVWLAGAVVGIVASWGLVELFPGSLAPDERLGYAANRVVGFALADPDLFTGRPHVFLNAIFGLFGAFALIGAAIVLFLSQRADNALTGEDESAIRGLLDLYGKDDSLGYFATRRDKSVVFASSGRACITYRVEVGVCLASGDPVGDHRAWPQAVDAWLRLCQTYGWAPGVMGASSQGAQTYREAGLTALELGDEAILRPADFKLSGPEMRGVRQAVTRARRAGLTVRIRRHRDIAEDEMAQTITRADSWRDTETERGFSMALGRLGDPADSDCLLVEAIDPHNQVLAMLSLVPWGTTGVSLDLMRRSPQSPNGTIELMVSELALHAESLGITRISLNFAVFRAAFEQGAQLGAGPVARLWRGLLVFFSRWWQLETLYRSNMKYQPEWVPRYACYEDARVIPRVGVASVIAEGFLVLPFSRRNRVHTGHHPAVPERLAATGLLHHDGSAPDVSGLRQVGLTNGDGVERRLPEQVRVRFDKLEKLRSSGIDAFPVGRPPSHTVAQALAADHQASVSVSGRIMRIRNYGGVLFAQLRDWSGEMQVLLDNSRLDQGCAADFNAATDLGDLVEMTGHMGASKTGTPSLIVSGWRLIGKCLRPLPNKWKGLLDPEARVRTRYLDLAVNAESRALITARSSVLRAVRETLFAKGFVEVETPILQQLHGGATARPFVTHINTYSMDLFLRIAPELYLKRLCVGGVERVFELGRAFRNEGVDFSHNPEFTLLEAYQAHADYLEWIDGCRELIQNAAQAANGAPIAMRPRTDKGSDGTRHHLEPVDISGIWPVRTVHDAISEALGERIDADTGLTTLRKLCDAAGVPYRTQWDAGAVVLELYEHLVECRTEQPTFYIDFPTSVSPLTRPHRSKRGVAERWDLVAWGIELGTAYSELTDPVEQRRRLQEQSLLAAGGDPEAMELDEDFLQAMEYAMPPTGGLGMGIDRVVMLITGRSIRETLPFPLAKPH</sequence>
<protein>
    <recommendedName>
        <fullName>Lysylphosphatidylglycerol biosynthesis bifunctional protein LysX</fullName>
    </recommendedName>
    <domain>
        <recommendedName>
            <fullName>Lysine--tRNA ligase</fullName>
            <ecNumber>6.1.1.6</ecNumber>
        </recommendedName>
        <alternativeName>
            <fullName>Lysyl-tRNA synthetase</fullName>
            <shortName>LysRS</shortName>
        </alternativeName>
    </domain>
    <domain>
        <recommendedName>
            <fullName>Phosphatidylglycerol lysyltransferase</fullName>
            <ecNumber>2.3.2.3</ecNumber>
        </recommendedName>
        <alternativeName>
            <fullName>Lysylphosphatidylglycerol synthetase</fullName>
            <shortName>LPG synthetase</shortName>
        </alternativeName>
    </domain>
</protein>
<accession>P9WFU7</accession>
<accession>L0T8V2</accession>
<accession>P94974</accession>
<evidence type="ECO:0000250" key="1"/>
<evidence type="ECO:0000255" key="2"/>
<evidence type="ECO:0000256" key="3">
    <source>
        <dbReference type="SAM" id="MobiDB-lite"/>
    </source>
</evidence>
<evidence type="ECO:0000269" key="4">
    <source>
    </source>
</evidence>
<evidence type="ECO:0000305" key="5"/>
<dbReference type="EC" id="6.1.1.6"/>
<dbReference type="EC" id="2.3.2.3"/>
<dbReference type="EMBL" id="AL123456">
    <property type="protein sequence ID" value="CCP44405.1"/>
    <property type="molecule type" value="Genomic_DNA"/>
</dbReference>
<dbReference type="PIR" id="C70619">
    <property type="entry name" value="C70619"/>
</dbReference>
<dbReference type="RefSeq" id="NP_216156.1">
    <property type="nucleotide sequence ID" value="NC_000962.3"/>
</dbReference>
<dbReference type="RefSeq" id="WP_003408102.1">
    <property type="nucleotide sequence ID" value="NC_000962.3"/>
</dbReference>
<dbReference type="SMR" id="P9WFU7"/>
<dbReference type="FunCoup" id="P9WFU7">
    <property type="interactions" value="23"/>
</dbReference>
<dbReference type="STRING" id="83332.Rv1640c"/>
<dbReference type="PaxDb" id="83332-Rv1640c"/>
<dbReference type="DNASU" id="885428"/>
<dbReference type="GeneID" id="885428"/>
<dbReference type="KEGG" id="mtu:Rv1640c"/>
<dbReference type="KEGG" id="mtv:RVBD_1640c"/>
<dbReference type="PATRIC" id="fig|83332.111.peg.1825"/>
<dbReference type="TubercuList" id="Rv1640c"/>
<dbReference type="eggNOG" id="COG1190">
    <property type="taxonomic scope" value="Bacteria"/>
</dbReference>
<dbReference type="eggNOG" id="COG2898">
    <property type="taxonomic scope" value="Bacteria"/>
</dbReference>
<dbReference type="InParanoid" id="P9WFU7"/>
<dbReference type="OrthoDB" id="9801152at2"/>
<dbReference type="BRENDA" id="2.3.2.3">
    <property type="organism ID" value="3445"/>
</dbReference>
<dbReference type="BRENDA" id="6.3.2.43">
    <property type="organism ID" value="3445"/>
</dbReference>
<dbReference type="Proteomes" id="UP000001584">
    <property type="component" value="Chromosome"/>
</dbReference>
<dbReference type="GO" id="GO:0005737">
    <property type="term" value="C:cytoplasm"/>
    <property type="evidence" value="ECO:0000318"/>
    <property type="project" value="GO_Central"/>
</dbReference>
<dbReference type="GO" id="GO:0005829">
    <property type="term" value="C:cytosol"/>
    <property type="evidence" value="ECO:0007005"/>
    <property type="project" value="MTBBASE"/>
</dbReference>
<dbReference type="GO" id="GO:0005886">
    <property type="term" value="C:plasma membrane"/>
    <property type="evidence" value="ECO:0007005"/>
    <property type="project" value="MTBBASE"/>
</dbReference>
<dbReference type="GO" id="GO:0005524">
    <property type="term" value="F:ATP binding"/>
    <property type="evidence" value="ECO:0007669"/>
    <property type="project" value="UniProtKB-UniRule"/>
</dbReference>
<dbReference type="GO" id="GO:0003677">
    <property type="term" value="F:DNA binding"/>
    <property type="evidence" value="ECO:0007669"/>
    <property type="project" value="UniProtKB-KW"/>
</dbReference>
<dbReference type="GO" id="GO:0004824">
    <property type="term" value="F:lysine-tRNA ligase activity"/>
    <property type="evidence" value="ECO:0000318"/>
    <property type="project" value="GO_Central"/>
</dbReference>
<dbReference type="GO" id="GO:0000287">
    <property type="term" value="F:magnesium ion binding"/>
    <property type="evidence" value="ECO:0007669"/>
    <property type="project" value="UniProtKB-UniRule"/>
</dbReference>
<dbReference type="GO" id="GO:0050071">
    <property type="term" value="F:phosphatidylglycerol lysyltransferase activity"/>
    <property type="evidence" value="ECO:0007669"/>
    <property type="project" value="UniProtKB-EC"/>
</dbReference>
<dbReference type="GO" id="GO:0000049">
    <property type="term" value="F:tRNA binding"/>
    <property type="evidence" value="ECO:0000318"/>
    <property type="project" value="GO_Central"/>
</dbReference>
<dbReference type="GO" id="GO:0006430">
    <property type="term" value="P:lysyl-tRNA aminoacylation"/>
    <property type="evidence" value="ECO:0000314"/>
    <property type="project" value="MTBBASE"/>
</dbReference>
<dbReference type="GO" id="GO:0046471">
    <property type="term" value="P:phosphatidylglycerol metabolic process"/>
    <property type="evidence" value="ECO:0000314"/>
    <property type="project" value="MTBBASE"/>
</dbReference>
<dbReference type="GO" id="GO:0008654">
    <property type="term" value="P:phospholipid biosynthetic process"/>
    <property type="evidence" value="ECO:0000314"/>
    <property type="project" value="MTBBASE"/>
</dbReference>
<dbReference type="GO" id="GO:0046677">
    <property type="term" value="P:response to antibiotic"/>
    <property type="evidence" value="ECO:0007669"/>
    <property type="project" value="UniProtKB-KW"/>
</dbReference>
<dbReference type="CDD" id="cd04322">
    <property type="entry name" value="LysRS_N"/>
    <property type="match status" value="1"/>
</dbReference>
<dbReference type="FunFam" id="2.40.50.140:FF:000404">
    <property type="entry name" value="Lysylphosphatidylglycerol biosynthesis bifunctional protein LysX"/>
    <property type="match status" value="1"/>
</dbReference>
<dbReference type="Gene3D" id="3.30.930.10">
    <property type="entry name" value="Bira Bifunctional Protein, Domain 2"/>
    <property type="match status" value="1"/>
</dbReference>
<dbReference type="Gene3D" id="2.40.50.140">
    <property type="entry name" value="Nucleic acid-binding proteins"/>
    <property type="match status" value="1"/>
</dbReference>
<dbReference type="HAMAP" id="MF_00252">
    <property type="entry name" value="Lys_tRNA_synth_class2"/>
    <property type="match status" value="1"/>
</dbReference>
<dbReference type="InterPro" id="IPR004364">
    <property type="entry name" value="Aa-tRNA-synt_II"/>
</dbReference>
<dbReference type="InterPro" id="IPR006195">
    <property type="entry name" value="aa-tRNA-synth_II"/>
</dbReference>
<dbReference type="InterPro" id="IPR045864">
    <property type="entry name" value="aa-tRNA-synth_II/BPL/LPL"/>
</dbReference>
<dbReference type="InterPro" id="IPR024320">
    <property type="entry name" value="LPG_synthase_C"/>
</dbReference>
<dbReference type="InterPro" id="IPR002313">
    <property type="entry name" value="Lys-tRNA-ligase_II"/>
</dbReference>
<dbReference type="InterPro" id="IPR044136">
    <property type="entry name" value="Lys-tRNA-ligase_II_N"/>
</dbReference>
<dbReference type="InterPro" id="IPR018149">
    <property type="entry name" value="Lys-tRNA-synth_II_C"/>
</dbReference>
<dbReference type="InterPro" id="IPR012340">
    <property type="entry name" value="NA-bd_OB-fold"/>
</dbReference>
<dbReference type="InterPro" id="IPR004365">
    <property type="entry name" value="NA-bd_OB_tRNA"/>
</dbReference>
<dbReference type="InterPro" id="IPR031553">
    <property type="entry name" value="tRNA-synt_2_TM"/>
</dbReference>
<dbReference type="NCBIfam" id="TIGR00499">
    <property type="entry name" value="lysS_bact"/>
    <property type="match status" value="1"/>
</dbReference>
<dbReference type="NCBIfam" id="NF001756">
    <property type="entry name" value="PRK00484.1"/>
    <property type="match status" value="1"/>
</dbReference>
<dbReference type="NCBIfam" id="NF002821">
    <property type="entry name" value="PRK02983.1"/>
    <property type="match status" value="1"/>
</dbReference>
<dbReference type="PANTHER" id="PTHR42918:SF15">
    <property type="entry name" value="LYSINE--TRNA LIGASE, CHLOROPLASTIC_MITOCHONDRIAL"/>
    <property type="match status" value="1"/>
</dbReference>
<dbReference type="PANTHER" id="PTHR42918">
    <property type="entry name" value="LYSYL-TRNA SYNTHETASE"/>
    <property type="match status" value="1"/>
</dbReference>
<dbReference type="Pfam" id="PF09924">
    <property type="entry name" value="LPG_synthase_C"/>
    <property type="match status" value="1"/>
</dbReference>
<dbReference type="Pfam" id="PF00152">
    <property type="entry name" value="tRNA-synt_2"/>
    <property type="match status" value="1"/>
</dbReference>
<dbReference type="Pfam" id="PF16995">
    <property type="entry name" value="tRNA-synt_2_TM"/>
    <property type="match status" value="1"/>
</dbReference>
<dbReference type="Pfam" id="PF01336">
    <property type="entry name" value="tRNA_anti-codon"/>
    <property type="match status" value="1"/>
</dbReference>
<dbReference type="PRINTS" id="PR00982">
    <property type="entry name" value="TRNASYNTHLYS"/>
</dbReference>
<dbReference type="SUPFAM" id="SSF55681">
    <property type="entry name" value="Class II aaRS and biotin synthetases"/>
    <property type="match status" value="1"/>
</dbReference>
<dbReference type="SUPFAM" id="SSF50249">
    <property type="entry name" value="Nucleic acid-binding proteins"/>
    <property type="match status" value="1"/>
</dbReference>
<dbReference type="PROSITE" id="PS50862">
    <property type="entry name" value="AA_TRNA_LIGASE_II"/>
    <property type="match status" value="1"/>
</dbReference>
<name>LYSX_MYCTU</name>
<keyword id="KW-0030">Aminoacyl-tRNA synthetase</keyword>
<keyword id="KW-0046">Antibiotic resistance</keyword>
<keyword id="KW-0067">ATP-binding</keyword>
<keyword id="KW-1003">Cell membrane</keyword>
<keyword id="KW-0238">DNA-binding</keyword>
<keyword id="KW-0436">Ligase</keyword>
<keyword id="KW-0443">Lipid metabolism</keyword>
<keyword id="KW-0460">Magnesium</keyword>
<keyword id="KW-0472">Membrane</keyword>
<keyword id="KW-0479">Metal-binding</keyword>
<keyword id="KW-0511">Multifunctional enzyme</keyword>
<keyword id="KW-0547">Nucleotide-binding</keyword>
<keyword id="KW-1185">Reference proteome</keyword>
<keyword id="KW-0808">Transferase</keyword>
<keyword id="KW-0812">Transmembrane</keyword>
<keyword id="KW-1133">Transmembrane helix</keyword>
<keyword id="KW-0843">Virulence</keyword>
<reference key="1">
    <citation type="journal article" date="1998" name="Nature">
        <title>Deciphering the biology of Mycobacterium tuberculosis from the complete genome sequence.</title>
        <authorList>
            <person name="Cole S.T."/>
            <person name="Brosch R."/>
            <person name="Parkhill J."/>
            <person name="Garnier T."/>
            <person name="Churcher C.M."/>
            <person name="Harris D.E."/>
            <person name="Gordon S.V."/>
            <person name="Eiglmeier K."/>
            <person name="Gas S."/>
            <person name="Barry C.E. III"/>
            <person name="Tekaia F."/>
            <person name="Badcock K."/>
            <person name="Basham D."/>
            <person name="Brown D."/>
            <person name="Chillingworth T."/>
            <person name="Connor R."/>
            <person name="Davies R.M."/>
            <person name="Devlin K."/>
            <person name="Feltwell T."/>
            <person name="Gentles S."/>
            <person name="Hamlin N."/>
            <person name="Holroyd S."/>
            <person name="Hornsby T."/>
            <person name="Jagels K."/>
            <person name="Krogh A."/>
            <person name="McLean J."/>
            <person name="Moule S."/>
            <person name="Murphy L.D."/>
            <person name="Oliver S."/>
            <person name="Osborne J."/>
            <person name="Quail M.A."/>
            <person name="Rajandream M.A."/>
            <person name="Rogers J."/>
            <person name="Rutter S."/>
            <person name="Seeger K."/>
            <person name="Skelton S."/>
            <person name="Squares S."/>
            <person name="Squares R."/>
            <person name="Sulston J.E."/>
            <person name="Taylor K."/>
            <person name="Whitehead S."/>
            <person name="Barrell B.G."/>
        </authorList>
    </citation>
    <scope>NUCLEOTIDE SEQUENCE [LARGE SCALE GENOMIC DNA]</scope>
    <source>
        <strain>ATCC 25618 / H37Rv</strain>
    </source>
</reference>
<reference key="2">
    <citation type="journal article" date="2009" name="PLoS Pathog.">
        <title>The two-domain LysX protein of Mycobacterium tuberculosis is required for production of lysinylated phosphatidylglycerol and resistance to cationic antimicrobial peptides.</title>
        <authorList>
            <person name="Maloney E."/>
            <person name="Stankowska D."/>
            <person name="Zhang J."/>
            <person name="Fol M."/>
            <person name="Cheng Q.J."/>
            <person name="Lun S."/>
            <person name="Bishai W.R."/>
            <person name="Rajagopalan M."/>
            <person name="Chatterjee D."/>
            <person name="Madiraju M.V."/>
        </authorList>
    </citation>
    <scope>FUNCTION IN THE PRODUCTION OF LYSINYLATED PHOSPHATIDYLGLYCEROL</scope>
    <scope>ROLE IN VIRULENCE</scope>
</reference>
<reference key="3">
    <citation type="journal article" date="2011" name="Mol. Cell. Proteomics">
        <title>Proteogenomic analysis of Mycobacterium tuberculosis by high resolution mass spectrometry.</title>
        <authorList>
            <person name="Kelkar D.S."/>
            <person name="Kumar D."/>
            <person name="Kumar P."/>
            <person name="Balakrishnan L."/>
            <person name="Muthusamy B."/>
            <person name="Yadav A.K."/>
            <person name="Shrivastava P."/>
            <person name="Marimuthu A."/>
            <person name="Anand S."/>
            <person name="Sundaram H."/>
            <person name="Kingsbury R."/>
            <person name="Harsha H.C."/>
            <person name="Nair B."/>
            <person name="Prasad T.S."/>
            <person name="Chauhan D.S."/>
            <person name="Katoch K."/>
            <person name="Katoch V.M."/>
            <person name="Kumar P."/>
            <person name="Chaerkady R."/>
            <person name="Ramachandran S."/>
            <person name="Dash D."/>
            <person name="Pandey A."/>
        </authorList>
    </citation>
    <scope>IDENTIFICATION BY MASS SPECTROMETRY [LARGE SCALE ANALYSIS]</scope>
    <source>
        <strain>ATCC 25618 / H37Rv</strain>
    </source>
</reference>
<feature type="chain" id="PRO_0000152657" description="Lysylphosphatidylglycerol biosynthesis bifunctional protein LysX">
    <location>
        <begin position="1"/>
        <end position="1172"/>
    </location>
</feature>
<feature type="transmembrane region" description="Helical" evidence="2">
    <location>
        <begin position="80"/>
        <end position="100"/>
    </location>
</feature>
<feature type="transmembrane region" description="Helical" evidence="2">
    <location>
        <begin position="122"/>
        <end position="142"/>
    </location>
</feature>
<feature type="transmembrane region" description="Helical" evidence="2">
    <location>
        <begin position="146"/>
        <end position="166"/>
    </location>
</feature>
<feature type="transmembrane region" description="Helical" evidence="2">
    <location>
        <begin position="177"/>
        <end position="197"/>
    </location>
</feature>
<feature type="transmembrane region" description="Helical" evidence="2">
    <location>
        <begin position="214"/>
        <end position="234"/>
    </location>
</feature>
<feature type="transmembrane region" description="Helical" evidence="2">
    <location>
        <begin position="272"/>
        <end position="292"/>
    </location>
</feature>
<feature type="transmembrane region" description="Helical" evidence="2">
    <location>
        <begin position="497"/>
        <end position="517"/>
    </location>
</feature>
<feature type="transmembrane region" description="Helical" evidence="2">
    <location>
        <begin position="612"/>
        <end position="632"/>
    </location>
</feature>
<feature type="DNA-binding region" description="OB">
    <location>
        <begin position="726"/>
        <end position="804"/>
    </location>
</feature>
<feature type="region of interest" description="Phosphatidylglycerol lysyltransferase">
    <location>
        <begin position="1"/>
        <end position="663"/>
    </location>
</feature>
<feature type="region of interest" description="Disordered" evidence="3">
    <location>
        <begin position="1"/>
        <end position="34"/>
    </location>
</feature>
<feature type="region of interest" description="Lysine--tRNA ligase">
    <location>
        <begin position="664"/>
        <end position="1172"/>
    </location>
</feature>
<feature type="compositionally biased region" description="Polar residues" evidence="3">
    <location>
        <begin position="17"/>
        <end position="31"/>
    </location>
</feature>
<feature type="binding site" evidence="1">
    <location>
        <position position="1084"/>
    </location>
    <ligand>
        <name>Mg(2+)</name>
        <dbReference type="ChEBI" id="CHEBI:18420"/>
        <label>1</label>
    </ligand>
</feature>
<feature type="binding site" evidence="1">
    <location>
        <position position="1091"/>
    </location>
    <ligand>
        <name>Mg(2+)</name>
        <dbReference type="ChEBI" id="CHEBI:18420"/>
        <label>1</label>
    </ligand>
</feature>
<feature type="binding site" evidence="1">
    <location>
        <position position="1091"/>
    </location>
    <ligand>
        <name>Mg(2+)</name>
        <dbReference type="ChEBI" id="CHEBI:18420"/>
        <label>2</label>
    </ligand>
</feature>
<organism>
    <name type="scientific">Mycobacterium tuberculosis (strain ATCC 25618 / H37Rv)</name>
    <dbReference type="NCBI Taxonomy" id="83332"/>
    <lineage>
        <taxon>Bacteria</taxon>
        <taxon>Bacillati</taxon>
        <taxon>Actinomycetota</taxon>
        <taxon>Actinomycetes</taxon>
        <taxon>Mycobacteriales</taxon>
        <taxon>Mycobacteriaceae</taxon>
        <taxon>Mycobacterium</taxon>
        <taxon>Mycobacterium tuberculosis complex</taxon>
    </lineage>
</organism>
<gene>
    <name type="primary">lysX</name>
    <name type="synonym">lysS2</name>
    <name type="synonym">lysU</name>
    <name type="synonym">mprF</name>
    <name type="ordered locus">Rv1640c</name>
    <name type="ORF">MTCY06H11.04c</name>
</gene>